<proteinExistence type="evidence at protein level"/>
<organism>
    <name type="scientific">Mycobacterium tuberculosis (strain ATCC 25618 / H37Rv)</name>
    <dbReference type="NCBI Taxonomy" id="83332"/>
    <lineage>
        <taxon>Bacteria</taxon>
        <taxon>Bacillati</taxon>
        <taxon>Actinomycetota</taxon>
        <taxon>Actinomycetes</taxon>
        <taxon>Mycobacteriales</taxon>
        <taxon>Mycobacteriaceae</taxon>
        <taxon>Mycobacterium</taxon>
        <taxon>Mycobacterium tuberculosis complex</taxon>
    </lineage>
</organism>
<evidence type="ECO:0000269" key="1">
    <source>
    </source>
</evidence>
<evidence type="ECO:0007829" key="2">
    <source>
        <dbReference type="PDB" id="4XGQ"/>
    </source>
</evidence>
<evidence type="ECO:0007829" key="3">
    <source>
        <dbReference type="PDB" id="4XGR"/>
    </source>
</evidence>
<protein>
    <recommendedName>
        <fullName>Antitoxin VapB30</fullName>
    </recommendedName>
</protein>
<name>VPB30_MYCTU</name>
<feature type="chain" id="PRO_0000408074" description="Antitoxin VapB30">
    <location>
        <begin position="1"/>
        <end position="84"/>
    </location>
</feature>
<feature type="helix" evidence="2">
    <location>
        <begin position="49"/>
        <end position="62"/>
    </location>
</feature>
<feature type="turn" evidence="3">
    <location>
        <begin position="71"/>
        <end position="76"/>
    </location>
</feature>
<sequence length="84" mass="9140">MALSIKHPEADRLARALAARTGETLTEAVVTALRERLARETGRARVVPLRDELAAIRHRCAALPVVDNRSAEAILGYDERGLPA</sequence>
<accession>P9WJ35</accession>
<accession>L0T603</accession>
<accession>P96913</accession>
<accession>Q7D9I6</accession>
<keyword id="KW-0002">3D-structure</keyword>
<keyword id="KW-1185">Reference proteome</keyword>
<keyword id="KW-1277">Toxin-antitoxin system</keyword>
<comment type="function">
    <text evidence="1">Antitoxin component of a type II toxin-antitoxin (TA) system. Upon expression in M.smegmatis neutralizes the effect of cognate toxin VapC30.</text>
</comment>
<reference key="1">
    <citation type="journal article" date="1998" name="Nature">
        <title>Deciphering the biology of Mycobacterium tuberculosis from the complete genome sequence.</title>
        <authorList>
            <person name="Cole S.T."/>
            <person name="Brosch R."/>
            <person name="Parkhill J."/>
            <person name="Garnier T."/>
            <person name="Churcher C.M."/>
            <person name="Harris D.E."/>
            <person name="Gordon S.V."/>
            <person name="Eiglmeier K."/>
            <person name="Gas S."/>
            <person name="Barry C.E. III"/>
            <person name="Tekaia F."/>
            <person name="Badcock K."/>
            <person name="Basham D."/>
            <person name="Brown D."/>
            <person name="Chillingworth T."/>
            <person name="Connor R."/>
            <person name="Davies R.M."/>
            <person name="Devlin K."/>
            <person name="Feltwell T."/>
            <person name="Gentles S."/>
            <person name="Hamlin N."/>
            <person name="Holroyd S."/>
            <person name="Hornsby T."/>
            <person name="Jagels K."/>
            <person name="Krogh A."/>
            <person name="McLean J."/>
            <person name="Moule S."/>
            <person name="Murphy L.D."/>
            <person name="Oliver S."/>
            <person name="Osborne J."/>
            <person name="Quail M.A."/>
            <person name="Rajandream M.A."/>
            <person name="Rogers J."/>
            <person name="Rutter S."/>
            <person name="Seeger K."/>
            <person name="Skelton S."/>
            <person name="Squares S."/>
            <person name="Squares R."/>
            <person name="Sulston J.E."/>
            <person name="Taylor K."/>
            <person name="Whitehead S."/>
            <person name="Barrell B.G."/>
        </authorList>
    </citation>
    <scope>NUCLEOTIDE SEQUENCE [LARGE SCALE GENOMIC DNA]</scope>
    <source>
        <strain>ATCC 25618 / H37Rv</strain>
    </source>
</reference>
<reference key="2">
    <citation type="journal article" date="2009" name="PLoS Genet.">
        <title>Comprehensive functional analysis of Mycobacterium tuberculosis toxin-antitoxin systems: implications for pathogenesis, stress responses, and evolution.</title>
        <authorList>
            <person name="Ramage H.R."/>
            <person name="Connolly L.E."/>
            <person name="Cox J.S."/>
        </authorList>
    </citation>
    <scope>EXPRESSION IN M.SMEGMATIS</scope>
    <scope>FUNCTION AS AN ANTITOXIN</scope>
    <source>
        <strain>ATCC 35801 / TMC 107 / Erdman</strain>
    </source>
</reference>
<reference key="3">
    <citation type="journal article" date="2011" name="Mol. Cell. Proteomics">
        <title>Proteogenomic analysis of Mycobacterium tuberculosis by high resolution mass spectrometry.</title>
        <authorList>
            <person name="Kelkar D.S."/>
            <person name="Kumar D."/>
            <person name="Kumar P."/>
            <person name="Balakrishnan L."/>
            <person name="Muthusamy B."/>
            <person name="Yadav A.K."/>
            <person name="Shrivastava P."/>
            <person name="Marimuthu A."/>
            <person name="Anand S."/>
            <person name="Sundaram H."/>
            <person name="Kingsbury R."/>
            <person name="Harsha H.C."/>
            <person name="Nair B."/>
            <person name="Prasad T.S."/>
            <person name="Chauhan D.S."/>
            <person name="Katoch K."/>
            <person name="Katoch V.M."/>
            <person name="Kumar P."/>
            <person name="Chaerkady R."/>
            <person name="Ramachandran S."/>
            <person name="Dash D."/>
            <person name="Pandey A."/>
        </authorList>
    </citation>
    <scope>IDENTIFICATION BY MASS SPECTROMETRY [LARGE SCALE ANALYSIS]</scope>
    <source>
        <strain>ATCC 25618 / H37Rv</strain>
    </source>
</reference>
<dbReference type="EMBL" id="AL123456">
    <property type="protein sequence ID" value="CCP43364.1"/>
    <property type="molecule type" value="Genomic_DNA"/>
</dbReference>
<dbReference type="PIR" id="D70611">
    <property type="entry name" value="D70611"/>
</dbReference>
<dbReference type="RefSeq" id="NP_215137.1">
    <property type="nucleotide sequence ID" value="NC_000962.3"/>
</dbReference>
<dbReference type="RefSeq" id="WP_003403235.1">
    <property type="nucleotide sequence ID" value="NZ_NVQJ01000033.1"/>
</dbReference>
<dbReference type="PDB" id="4XGQ">
    <property type="method" value="X-ray"/>
    <property type="resolution" value="2.70 A"/>
    <property type="chains" value="B/D/F/H=1-84"/>
</dbReference>
<dbReference type="PDB" id="4XGR">
    <property type="method" value="X-ray"/>
    <property type="resolution" value="2.70 A"/>
    <property type="chains" value="B/D/F/H=1-84"/>
</dbReference>
<dbReference type="PDBsum" id="4XGQ"/>
<dbReference type="PDBsum" id="4XGR"/>
<dbReference type="SMR" id="P9WJ35"/>
<dbReference type="STRING" id="83332.Rv0623"/>
<dbReference type="PaxDb" id="83332-Rv0623"/>
<dbReference type="DNASU" id="887970"/>
<dbReference type="GeneID" id="887970"/>
<dbReference type="KEGG" id="mtu:Rv0623"/>
<dbReference type="KEGG" id="mtv:RVBD_0623"/>
<dbReference type="TubercuList" id="Rv0623"/>
<dbReference type="eggNOG" id="COG4423">
    <property type="taxonomic scope" value="Bacteria"/>
</dbReference>
<dbReference type="InParanoid" id="P9WJ35"/>
<dbReference type="OrthoDB" id="495439at2"/>
<dbReference type="PhylomeDB" id="P9WJ35"/>
<dbReference type="EvolutionaryTrace" id="P9WJ35"/>
<dbReference type="Proteomes" id="UP000001584">
    <property type="component" value="Chromosome"/>
</dbReference>
<dbReference type="GO" id="GO:0045927">
    <property type="term" value="P:positive regulation of growth"/>
    <property type="evidence" value="ECO:0000315"/>
    <property type="project" value="MTBBASE"/>
</dbReference>
<dbReference type="DisProt" id="DP00908"/>
<dbReference type="InterPro" id="IPR011660">
    <property type="entry name" value="VapB-like"/>
</dbReference>
<dbReference type="Pfam" id="PF07704">
    <property type="entry name" value="PSK_trans_fac"/>
    <property type="match status" value="1"/>
</dbReference>
<gene>
    <name type="primary">vapB30</name>
    <name type="ordered locus">Rv0623</name>
</gene>